<organism>
    <name type="scientific">Drosophila melanogaster</name>
    <name type="common">Fruit fly</name>
    <dbReference type="NCBI Taxonomy" id="7227"/>
    <lineage>
        <taxon>Eukaryota</taxon>
        <taxon>Metazoa</taxon>
        <taxon>Ecdysozoa</taxon>
        <taxon>Arthropoda</taxon>
        <taxon>Hexapoda</taxon>
        <taxon>Insecta</taxon>
        <taxon>Pterygota</taxon>
        <taxon>Neoptera</taxon>
        <taxon>Endopterygota</taxon>
        <taxon>Diptera</taxon>
        <taxon>Brachycera</taxon>
        <taxon>Muscomorpha</taxon>
        <taxon>Ephydroidea</taxon>
        <taxon>Drosophilidae</taxon>
        <taxon>Drosophila</taxon>
        <taxon>Sophophora</taxon>
    </lineage>
</organism>
<feature type="chain" id="PRO_0000084567" description="Vesicle-fusing ATPase 2">
    <location>
        <begin position="1"/>
        <end position="752"/>
    </location>
</feature>
<feature type="binding site" evidence="2">
    <location>
        <begin position="510"/>
        <end position="515"/>
    </location>
    <ligand>
        <name>ATP</name>
        <dbReference type="ChEBI" id="CHEBI:30616"/>
    </ligand>
</feature>
<feature type="binding site" evidence="2">
    <location>
        <begin position="550"/>
        <end position="557"/>
    </location>
    <ligand>
        <name>ATP</name>
        <dbReference type="ChEBI" id="CHEBI:30616"/>
    </ligand>
</feature>
<feature type="sequence conflict" description="In Ref. 1; AAA75044 and 5; AAC46844." evidence="4" ref="1 5">
    <original>N</original>
    <variation>H</variation>
    <location>
        <position position="680"/>
    </location>
</feature>
<sequence length="752" mass="83434">MSIEKAHRMRAIKCPTDELSLTNKAIVNVSDFTEEVKYVDISPGPGLHYIFALEKISGPELPLGHVGFSLVQRKWATLSINQEIDVRPYRFDASADIITLVSFETDFLQKKTTTQEPYDSDEMAKEFLMQFAGMPLTVGQTLVFQFKDKKFLGLAVKTLEAVDPRTVGDSLPKTRNVRFGRILGNTVVQFEKAENSVLNLQGRSKGKIVRQSIINPDWDFGKMGIGGLDKEFNAIFRRAFASRVFPPELVEQLGIKHVKGILLYGPPGTGKTLMARQIGTMLNAREPKIVNGPQILDKYVGESEANIRRLFAEAEEEEKRLGPNSGLHIIIFDEIDAICKARGSVAGNSGVHDTVVNQLLAKIDGVEQLNNILVIGMTNRRDMIDEALLRPGRLEVQMEISLPNEQGRVQILNIHTKRMRDFNKIASDVDNNEIAAKTKNFSGAELEGLVRAAQSTAMNRLIKADSKVHVDPEAMEKLRVTRADFLHALDNDIKPAFGAAQEMLENLLARGIINWGPPVTELLEDGMLSVQQAKATESSGLVSVLIEGAPNSGKSALAANLAQLSDFPFVKVCSPEDMVGFTESAKCLHIRKIFDDAYRSTLSCIVVDNVERLLDYGPIGPRYSNLTLQALLVLLKKQPPKGRKLLILCTSSRRDVLEEMEMLSAFTSVLHVSNLSTPENVLAVLDDSDLFSPEELQSIARKMAGKRLCIGIKKLLALIDMIRQSEPHQRVIKFLSKMEEEGGLEMDRVQGH</sequence>
<dbReference type="EC" id="3.6.4.6"/>
<dbReference type="EMBL" id="U30502">
    <property type="protein sequence ID" value="AAA75044.1"/>
    <property type="molecule type" value="mRNA"/>
</dbReference>
<dbReference type="EMBL" id="AE014297">
    <property type="protein sequence ID" value="AAF54995.2"/>
    <property type="molecule type" value="Genomic_DNA"/>
</dbReference>
<dbReference type="EMBL" id="BT023784">
    <property type="protein sequence ID" value="AAZ41793.1"/>
    <property type="molecule type" value="mRNA"/>
</dbReference>
<dbReference type="EMBL" id="U28836">
    <property type="protein sequence ID" value="AAC46844.1"/>
    <property type="status" value="ALT_INIT"/>
    <property type="molecule type" value="mRNA"/>
</dbReference>
<dbReference type="RefSeq" id="NP_001287318.1">
    <property type="nucleotide sequence ID" value="NM_001300389.1"/>
</dbReference>
<dbReference type="RefSeq" id="NP_001287319.1">
    <property type="nucleotide sequence ID" value="NM_001300390.1"/>
</dbReference>
<dbReference type="RefSeq" id="NP_788676.1">
    <property type="nucleotide sequence ID" value="NM_176499.2"/>
</dbReference>
<dbReference type="SMR" id="P54351"/>
<dbReference type="BioGRID" id="66772">
    <property type="interactions" value="94"/>
</dbReference>
<dbReference type="FunCoup" id="P54351">
    <property type="interactions" value="2133"/>
</dbReference>
<dbReference type="IntAct" id="P54351">
    <property type="interactions" value="21"/>
</dbReference>
<dbReference type="STRING" id="7227.FBpp0311095"/>
<dbReference type="PaxDb" id="7227-FBpp0082346"/>
<dbReference type="DNASU" id="41694"/>
<dbReference type="EnsemblMetazoa" id="FBtr0082883">
    <property type="protein sequence ID" value="FBpp0082346"/>
    <property type="gene ID" value="FBgn0266464"/>
</dbReference>
<dbReference type="EnsemblMetazoa" id="FBtr0344766">
    <property type="protein sequence ID" value="FBpp0311094"/>
    <property type="gene ID" value="FBgn0266464"/>
</dbReference>
<dbReference type="EnsemblMetazoa" id="FBtr0344767">
    <property type="protein sequence ID" value="FBpp0311095"/>
    <property type="gene ID" value="FBgn0266464"/>
</dbReference>
<dbReference type="GeneID" id="41694"/>
<dbReference type="KEGG" id="dme:Dmel_CG33101"/>
<dbReference type="AGR" id="FB:FBgn0266464"/>
<dbReference type="CTD" id="41694"/>
<dbReference type="FlyBase" id="FBgn0266464">
    <property type="gene designation" value="Nsf2"/>
</dbReference>
<dbReference type="VEuPathDB" id="VectorBase:FBgn0266464"/>
<dbReference type="eggNOG" id="KOG0741">
    <property type="taxonomic scope" value="Eukaryota"/>
</dbReference>
<dbReference type="GeneTree" id="ENSGT00530000064085"/>
<dbReference type="HOGENOM" id="CLU_008037_2_0_1"/>
<dbReference type="InParanoid" id="P54351"/>
<dbReference type="OMA" id="CFDNEIA"/>
<dbReference type="OrthoDB" id="9982946at2759"/>
<dbReference type="PhylomeDB" id="P54351"/>
<dbReference type="BRENDA" id="3.6.4.6">
    <property type="organism ID" value="1994"/>
</dbReference>
<dbReference type="SignaLink" id="P54351"/>
<dbReference type="BioGRID-ORCS" id="41694">
    <property type="hits" value="0 hits in 3 CRISPR screens"/>
</dbReference>
<dbReference type="GenomeRNAi" id="41694"/>
<dbReference type="PRO" id="PR:P54351"/>
<dbReference type="Proteomes" id="UP000000803">
    <property type="component" value="Chromosome 3R"/>
</dbReference>
<dbReference type="Bgee" id="FBgn0266464">
    <property type="expression patterns" value="Expressed in adult midgut enterocyte in digestive tract and 179 other cell types or tissues"/>
</dbReference>
<dbReference type="ExpressionAtlas" id="P54351">
    <property type="expression patterns" value="baseline and differential"/>
</dbReference>
<dbReference type="GO" id="GO:0005737">
    <property type="term" value="C:cytoplasm"/>
    <property type="evidence" value="ECO:0000250"/>
    <property type="project" value="FlyBase"/>
</dbReference>
<dbReference type="GO" id="GO:0005795">
    <property type="term" value="C:Golgi stack"/>
    <property type="evidence" value="ECO:0000318"/>
    <property type="project" value="GO_Central"/>
</dbReference>
<dbReference type="GO" id="GO:0098793">
    <property type="term" value="C:presynapse"/>
    <property type="evidence" value="ECO:0007669"/>
    <property type="project" value="GOC"/>
</dbReference>
<dbReference type="GO" id="GO:0005524">
    <property type="term" value="F:ATP binding"/>
    <property type="evidence" value="ECO:0007669"/>
    <property type="project" value="UniProtKB-KW"/>
</dbReference>
<dbReference type="GO" id="GO:0016887">
    <property type="term" value="F:ATP hydrolysis activity"/>
    <property type="evidence" value="ECO:0000250"/>
    <property type="project" value="FlyBase"/>
</dbReference>
<dbReference type="GO" id="GO:0046872">
    <property type="term" value="F:metal ion binding"/>
    <property type="evidence" value="ECO:0007669"/>
    <property type="project" value="UniProtKB-KW"/>
</dbReference>
<dbReference type="GO" id="GO:0043001">
    <property type="term" value="P:Golgi to plasma membrane protein transport"/>
    <property type="evidence" value="ECO:0000318"/>
    <property type="project" value="GO_Central"/>
</dbReference>
<dbReference type="GO" id="GO:0006891">
    <property type="term" value="P:intra-Golgi vesicle-mediated transport"/>
    <property type="evidence" value="ECO:0000318"/>
    <property type="project" value="GO_Central"/>
</dbReference>
<dbReference type="GO" id="GO:0035002">
    <property type="term" value="P:liquid clearance, open tracheal system"/>
    <property type="evidence" value="ECO:0007001"/>
    <property type="project" value="FlyBase"/>
</dbReference>
<dbReference type="GO" id="GO:0007274">
    <property type="term" value="P:neuromuscular synaptic transmission"/>
    <property type="evidence" value="ECO:0000315"/>
    <property type="project" value="FlyBase"/>
</dbReference>
<dbReference type="GO" id="GO:0007269">
    <property type="term" value="P:neurotransmitter secretion"/>
    <property type="evidence" value="ECO:0000303"/>
    <property type="project" value="FlyBase"/>
</dbReference>
<dbReference type="GO" id="GO:0007424">
    <property type="term" value="P:open tracheal system development"/>
    <property type="evidence" value="ECO:0007001"/>
    <property type="project" value="FlyBase"/>
</dbReference>
<dbReference type="GO" id="GO:0008582">
    <property type="term" value="P:regulation of synaptic assembly at neuromuscular junction"/>
    <property type="evidence" value="ECO:0000315"/>
    <property type="project" value="FlyBase"/>
</dbReference>
<dbReference type="GO" id="GO:0035494">
    <property type="term" value="P:SNARE complex disassembly"/>
    <property type="evidence" value="ECO:0000250"/>
    <property type="project" value="FlyBase"/>
</dbReference>
<dbReference type="GO" id="GO:0016082">
    <property type="term" value="P:synaptic vesicle priming"/>
    <property type="evidence" value="ECO:0000303"/>
    <property type="project" value="FlyBase"/>
</dbReference>
<dbReference type="GO" id="GO:0007430">
    <property type="term" value="P:terminal branching, open tracheal system"/>
    <property type="evidence" value="ECO:0007001"/>
    <property type="project" value="FlyBase"/>
</dbReference>
<dbReference type="GO" id="GO:0060439">
    <property type="term" value="P:trachea morphogenesis"/>
    <property type="evidence" value="ECO:0000315"/>
    <property type="project" value="FlyBase"/>
</dbReference>
<dbReference type="GO" id="GO:0016192">
    <property type="term" value="P:vesicle-mediated transport"/>
    <property type="evidence" value="ECO:0000250"/>
    <property type="project" value="FlyBase"/>
</dbReference>
<dbReference type="CDD" id="cd19504">
    <property type="entry name" value="RecA-like_NSF-SEC18_r1-like"/>
    <property type="match status" value="1"/>
</dbReference>
<dbReference type="FunFam" id="2.40.40.20:FF:000032">
    <property type="entry name" value="vesicle-fusing ATPase 2"/>
    <property type="match status" value="1"/>
</dbReference>
<dbReference type="FunFam" id="3.10.330.10:FF:000010">
    <property type="entry name" value="vesicle-fusing ATPase 2"/>
    <property type="match status" value="1"/>
</dbReference>
<dbReference type="FunFam" id="1.10.8.60:FF:000026">
    <property type="entry name" value="vesicle-fusing ATPase isoform X1"/>
    <property type="match status" value="1"/>
</dbReference>
<dbReference type="FunFam" id="1.10.8.60:FF:000031">
    <property type="entry name" value="vesicle-fusing ATPase isoform X1"/>
    <property type="match status" value="1"/>
</dbReference>
<dbReference type="FunFam" id="3.40.50.300:FF:000166">
    <property type="entry name" value="vesicle-fusing ATPase isoform X1"/>
    <property type="match status" value="1"/>
</dbReference>
<dbReference type="FunFam" id="3.40.50.300:FF:000187">
    <property type="entry name" value="Vesicular-fusion ATPase SEC18"/>
    <property type="match status" value="1"/>
</dbReference>
<dbReference type="Gene3D" id="1.10.8.60">
    <property type="match status" value="2"/>
</dbReference>
<dbReference type="Gene3D" id="2.40.40.20">
    <property type="match status" value="1"/>
</dbReference>
<dbReference type="Gene3D" id="3.10.330.10">
    <property type="match status" value="1"/>
</dbReference>
<dbReference type="Gene3D" id="3.40.50.300">
    <property type="entry name" value="P-loop containing nucleotide triphosphate hydrolases"/>
    <property type="match status" value="2"/>
</dbReference>
<dbReference type="InterPro" id="IPR003593">
    <property type="entry name" value="AAA+_ATPase"/>
</dbReference>
<dbReference type="InterPro" id="IPR041569">
    <property type="entry name" value="AAA_lid_3"/>
</dbReference>
<dbReference type="InterPro" id="IPR009010">
    <property type="entry name" value="Asp_de-COase-like_dom_sf"/>
</dbReference>
<dbReference type="InterPro" id="IPR003959">
    <property type="entry name" value="ATPase_AAA_core"/>
</dbReference>
<dbReference type="InterPro" id="IPR003960">
    <property type="entry name" value="ATPase_AAA_CS"/>
</dbReference>
<dbReference type="InterPro" id="IPR004201">
    <property type="entry name" value="Cdc48_dom2"/>
</dbReference>
<dbReference type="InterPro" id="IPR029067">
    <property type="entry name" value="CDC48_domain_2-like_sf"/>
</dbReference>
<dbReference type="InterPro" id="IPR003338">
    <property type="entry name" value="CDC4_N-term_subdom"/>
</dbReference>
<dbReference type="InterPro" id="IPR054419">
    <property type="entry name" value="NSF_ATPase_lid"/>
</dbReference>
<dbReference type="InterPro" id="IPR027417">
    <property type="entry name" value="P-loop_NTPase"/>
</dbReference>
<dbReference type="InterPro" id="IPR039812">
    <property type="entry name" value="Vesicle-fus_ATPase"/>
</dbReference>
<dbReference type="PANTHER" id="PTHR23078:SF3">
    <property type="entry name" value="VESICLE-FUSING ATPASE"/>
    <property type="match status" value="1"/>
</dbReference>
<dbReference type="PANTHER" id="PTHR23078">
    <property type="entry name" value="VESICULAR-FUSION PROTEIN NSF"/>
    <property type="match status" value="1"/>
</dbReference>
<dbReference type="Pfam" id="PF00004">
    <property type="entry name" value="AAA"/>
    <property type="match status" value="2"/>
</dbReference>
<dbReference type="Pfam" id="PF17862">
    <property type="entry name" value="AAA_lid_3"/>
    <property type="match status" value="1"/>
</dbReference>
<dbReference type="Pfam" id="PF02933">
    <property type="entry name" value="CDC48_2"/>
    <property type="match status" value="1"/>
</dbReference>
<dbReference type="Pfam" id="PF02359">
    <property type="entry name" value="CDC48_N"/>
    <property type="match status" value="1"/>
</dbReference>
<dbReference type="Pfam" id="PF21964">
    <property type="entry name" value="NSF_ATPase_lid"/>
    <property type="match status" value="1"/>
</dbReference>
<dbReference type="SMART" id="SM00382">
    <property type="entry name" value="AAA"/>
    <property type="match status" value="2"/>
</dbReference>
<dbReference type="SMART" id="SM01072">
    <property type="entry name" value="CDC48_2"/>
    <property type="match status" value="1"/>
</dbReference>
<dbReference type="SMART" id="SM01073">
    <property type="entry name" value="CDC48_N"/>
    <property type="match status" value="1"/>
</dbReference>
<dbReference type="SUPFAM" id="SSF50692">
    <property type="entry name" value="ADC-like"/>
    <property type="match status" value="1"/>
</dbReference>
<dbReference type="SUPFAM" id="SSF54585">
    <property type="entry name" value="Cdc48 domain 2-like"/>
    <property type="match status" value="1"/>
</dbReference>
<dbReference type="SUPFAM" id="SSF52540">
    <property type="entry name" value="P-loop containing nucleoside triphosphate hydrolases"/>
    <property type="match status" value="2"/>
</dbReference>
<dbReference type="PROSITE" id="PS00674">
    <property type="entry name" value="AAA"/>
    <property type="match status" value="1"/>
</dbReference>
<evidence type="ECO:0000250" key="1"/>
<evidence type="ECO:0000250" key="2">
    <source>
        <dbReference type="UniProtKB" id="P18708"/>
    </source>
</evidence>
<evidence type="ECO:0000269" key="3">
    <source>
    </source>
</evidence>
<evidence type="ECO:0000305" key="4"/>
<gene>
    <name type="primary">Nsf2</name>
    <name type="ORF">CG33101</name>
</gene>
<protein>
    <recommendedName>
        <fullName>Vesicle-fusing ATPase 2</fullName>
        <ecNumber>3.6.4.6</ecNumber>
    </recommendedName>
    <alternativeName>
        <fullName>N-ethylmaleimide-sensitive fusion protein 2</fullName>
        <shortName>NEM-sensitive fusion protein 2</shortName>
    </alternativeName>
    <alternativeName>
        <fullName>Vesicular-fusion protein NSF2</fullName>
    </alternativeName>
    <alternativeName>
        <fullName>dNsf-2</fullName>
        <shortName>NSF-2</shortName>
    </alternativeName>
</protein>
<proteinExistence type="evidence at transcript level"/>
<comment type="function">
    <text evidence="1">Required for vesicle-mediated transport. Catalyzes the fusion of transport vesicles within the Golgi cisternae. Is also required for transport from the endoplasmic reticulum to the Golgi stack. Seems to function as a fusion protein required for the delivery of cargo proteins to all compartments of the Golgi stack independent of vesicle origin (By similarity).</text>
</comment>
<comment type="catalytic activity">
    <reaction>
        <text>ATP + H2O = ADP + phosphate + H(+)</text>
        <dbReference type="Rhea" id="RHEA:13065"/>
        <dbReference type="ChEBI" id="CHEBI:15377"/>
        <dbReference type="ChEBI" id="CHEBI:15378"/>
        <dbReference type="ChEBI" id="CHEBI:30616"/>
        <dbReference type="ChEBI" id="CHEBI:43474"/>
        <dbReference type="ChEBI" id="CHEBI:456216"/>
        <dbReference type="EC" id="3.6.4.6"/>
    </reaction>
</comment>
<comment type="cofactor">
    <cofactor evidence="2">
        <name>Mg(2+)</name>
        <dbReference type="ChEBI" id="CHEBI:18420"/>
    </cofactor>
    <text evidence="2">Binds 1 Mg(2+) ion per subunit.</text>
</comment>
<comment type="subunit">
    <text evidence="1">Homohexamer.</text>
</comment>
<comment type="subcellular location">
    <subcellularLocation>
        <location evidence="3">Cytoplasm</location>
    </subcellularLocation>
</comment>
<comment type="tissue specificity">
    <text evidence="3">Nervous system and secretory tissues.</text>
</comment>
<comment type="developmental stage">
    <text evidence="3">The highest levels are detected in embryos before and during cellularization. After onset of gastrulation the highest levels of expression appear in embryonic regions that give rise to endodermal and ectodermal tissues including the midgut and hindgut.</text>
</comment>
<comment type="similarity">
    <text evidence="4">Belongs to the AAA ATPase family.</text>
</comment>
<comment type="caution">
    <text evidence="4">It is uncertain whether Met-1 or Met-9 is the initiator.</text>
</comment>
<comment type="sequence caution" evidence="4">
    <conflict type="erroneous initiation">
        <sequence resource="EMBL-CDS" id="AAC46844"/>
    </conflict>
    <text>Truncated N-terminus.</text>
</comment>
<reference key="1">
    <citation type="journal article" date="1995" name="J. Biol. Chem.">
        <title>Distinct roles for N-ethylmaleimide-sensitive fusion protein (NSF) suggested by the identification of a second Drosophila NSF homolog.</title>
        <authorList>
            <person name="Pallanck L."/>
            <person name="Ordway R.W."/>
            <person name="Ramaswami M."/>
            <person name="Chi W.Y."/>
            <person name="Krishnan K.S."/>
            <person name="Ganetzky B."/>
        </authorList>
    </citation>
    <scope>NUCLEOTIDE SEQUENCE [MRNA]</scope>
    <scope>SUBCELLULAR LOCATION</scope>
    <scope>TISSUE SPECIFICITY</scope>
    <scope>DEVELOPMENTAL STAGE</scope>
    <source>
        <strain>Canton-S</strain>
    </source>
</reference>
<reference key="2">
    <citation type="journal article" date="2000" name="Science">
        <title>The genome sequence of Drosophila melanogaster.</title>
        <authorList>
            <person name="Adams M.D."/>
            <person name="Celniker S.E."/>
            <person name="Holt R.A."/>
            <person name="Evans C.A."/>
            <person name="Gocayne J.D."/>
            <person name="Amanatides P.G."/>
            <person name="Scherer S.E."/>
            <person name="Li P.W."/>
            <person name="Hoskins R.A."/>
            <person name="Galle R.F."/>
            <person name="George R.A."/>
            <person name="Lewis S.E."/>
            <person name="Richards S."/>
            <person name="Ashburner M."/>
            <person name="Henderson S.N."/>
            <person name="Sutton G.G."/>
            <person name="Wortman J.R."/>
            <person name="Yandell M.D."/>
            <person name="Zhang Q."/>
            <person name="Chen L.X."/>
            <person name="Brandon R.C."/>
            <person name="Rogers Y.-H.C."/>
            <person name="Blazej R.G."/>
            <person name="Champe M."/>
            <person name="Pfeiffer B.D."/>
            <person name="Wan K.H."/>
            <person name="Doyle C."/>
            <person name="Baxter E.G."/>
            <person name="Helt G."/>
            <person name="Nelson C.R."/>
            <person name="Miklos G.L.G."/>
            <person name="Abril J.F."/>
            <person name="Agbayani A."/>
            <person name="An H.-J."/>
            <person name="Andrews-Pfannkoch C."/>
            <person name="Baldwin D."/>
            <person name="Ballew R.M."/>
            <person name="Basu A."/>
            <person name="Baxendale J."/>
            <person name="Bayraktaroglu L."/>
            <person name="Beasley E.M."/>
            <person name="Beeson K.Y."/>
            <person name="Benos P.V."/>
            <person name="Berman B.P."/>
            <person name="Bhandari D."/>
            <person name="Bolshakov S."/>
            <person name="Borkova D."/>
            <person name="Botchan M.R."/>
            <person name="Bouck J."/>
            <person name="Brokstein P."/>
            <person name="Brottier P."/>
            <person name="Burtis K.C."/>
            <person name="Busam D.A."/>
            <person name="Butler H."/>
            <person name="Cadieu E."/>
            <person name="Center A."/>
            <person name="Chandra I."/>
            <person name="Cherry J.M."/>
            <person name="Cawley S."/>
            <person name="Dahlke C."/>
            <person name="Davenport L.B."/>
            <person name="Davies P."/>
            <person name="de Pablos B."/>
            <person name="Delcher A."/>
            <person name="Deng Z."/>
            <person name="Mays A.D."/>
            <person name="Dew I."/>
            <person name="Dietz S.M."/>
            <person name="Dodson K."/>
            <person name="Doup L.E."/>
            <person name="Downes M."/>
            <person name="Dugan-Rocha S."/>
            <person name="Dunkov B.C."/>
            <person name="Dunn P."/>
            <person name="Durbin K.J."/>
            <person name="Evangelista C.C."/>
            <person name="Ferraz C."/>
            <person name="Ferriera S."/>
            <person name="Fleischmann W."/>
            <person name="Fosler C."/>
            <person name="Gabrielian A.E."/>
            <person name="Garg N.S."/>
            <person name="Gelbart W.M."/>
            <person name="Glasser K."/>
            <person name="Glodek A."/>
            <person name="Gong F."/>
            <person name="Gorrell J.H."/>
            <person name="Gu Z."/>
            <person name="Guan P."/>
            <person name="Harris M."/>
            <person name="Harris N.L."/>
            <person name="Harvey D.A."/>
            <person name="Heiman T.J."/>
            <person name="Hernandez J.R."/>
            <person name="Houck J."/>
            <person name="Hostin D."/>
            <person name="Houston K.A."/>
            <person name="Howland T.J."/>
            <person name="Wei M.-H."/>
            <person name="Ibegwam C."/>
            <person name="Jalali M."/>
            <person name="Kalush F."/>
            <person name="Karpen G.H."/>
            <person name="Ke Z."/>
            <person name="Kennison J.A."/>
            <person name="Ketchum K.A."/>
            <person name="Kimmel B.E."/>
            <person name="Kodira C.D."/>
            <person name="Kraft C.L."/>
            <person name="Kravitz S."/>
            <person name="Kulp D."/>
            <person name="Lai Z."/>
            <person name="Lasko P."/>
            <person name="Lei Y."/>
            <person name="Levitsky A.A."/>
            <person name="Li J.H."/>
            <person name="Li Z."/>
            <person name="Liang Y."/>
            <person name="Lin X."/>
            <person name="Liu X."/>
            <person name="Mattei B."/>
            <person name="McIntosh T.C."/>
            <person name="McLeod M.P."/>
            <person name="McPherson D."/>
            <person name="Merkulov G."/>
            <person name="Milshina N.V."/>
            <person name="Mobarry C."/>
            <person name="Morris J."/>
            <person name="Moshrefi A."/>
            <person name="Mount S.M."/>
            <person name="Moy M."/>
            <person name="Murphy B."/>
            <person name="Murphy L."/>
            <person name="Muzny D.M."/>
            <person name="Nelson D.L."/>
            <person name="Nelson D.R."/>
            <person name="Nelson K.A."/>
            <person name="Nixon K."/>
            <person name="Nusskern D.R."/>
            <person name="Pacleb J.M."/>
            <person name="Palazzolo M."/>
            <person name="Pittman G.S."/>
            <person name="Pan S."/>
            <person name="Pollard J."/>
            <person name="Puri V."/>
            <person name="Reese M.G."/>
            <person name="Reinert K."/>
            <person name="Remington K."/>
            <person name="Saunders R.D.C."/>
            <person name="Scheeler F."/>
            <person name="Shen H."/>
            <person name="Shue B.C."/>
            <person name="Siden-Kiamos I."/>
            <person name="Simpson M."/>
            <person name="Skupski M.P."/>
            <person name="Smith T.J."/>
            <person name="Spier E."/>
            <person name="Spradling A.C."/>
            <person name="Stapleton M."/>
            <person name="Strong R."/>
            <person name="Sun E."/>
            <person name="Svirskas R."/>
            <person name="Tector C."/>
            <person name="Turner R."/>
            <person name="Venter E."/>
            <person name="Wang A.H."/>
            <person name="Wang X."/>
            <person name="Wang Z.-Y."/>
            <person name="Wassarman D.A."/>
            <person name="Weinstock G.M."/>
            <person name="Weissenbach J."/>
            <person name="Williams S.M."/>
            <person name="Woodage T."/>
            <person name="Worley K.C."/>
            <person name="Wu D."/>
            <person name="Yang S."/>
            <person name="Yao Q.A."/>
            <person name="Ye J."/>
            <person name="Yeh R.-F."/>
            <person name="Zaveri J.S."/>
            <person name="Zhan M."/>
            <person name="Zhang G."/>
            <person name="Zhao Q."/>
            <person name="Zheng L."/>
            <person name="Zheng X.H."/>
            <person name="Zhong F.N."/>
            <person name="Zhong W."/>
            <person name="Zhou X."/>
            <person name="Zhu S.C."/>
            <person name="Zhu X."/>
            <person name="Smith H.O."/>
            <person name="Gibbs R.A."/>
            <person name="Myers E.W."/>
            <person name="Rubin G.M."/>
            <person name="Venter J.C."/>
        </authorList>
    </citation>
    <scope>NUCLEOTIDE SEQUENCE [LARGE SCALE GENOMIC DNA]</scope>
    <source>
        <strain>Berkeley</strain>
    </source>
</reference>
<reference key="3">
    <citation type="journal article" date="2002" name="Genome Biol.">
        <title>Annotation of the Drosophila melanogaster euchromatic genome: a systematic review.</title>
        <authorList>
            <person name="Misra S."/>
            <person name="Crosby M.A."/>
            <person name="Mungall C.J."/>
            <person name="Matthews B.B."/>
            <person name="Campbell K.S."/>
            <person name="Hradecky P."/>
            <person name="Huang Y."/>
            <person name="Kaminker J.S."/>
            <person name="Millburn G.H."/>
            <person name="Prochnik S.E."/>
            <person name="Smith C.D."/>
            <person name="Tupy J.L."/>
            <person name="Whitfield E.J."/>
            <person name="Bayraktaroglu L."/>
            <person name="Berman B.P."/>
            <person name="Bettencourt B.R."/>
            <person name="Celniker S.E."/>
            <person name="de Grey A.D.N.J."/>
            <person name="Drysdale R.A."/>
            <person name="Harris N.L."/>
            <person name="Richter J."/>
            <person name="Russo S."/>
            <person name="Schroeder A.J."/>
            <person name="Shu S.Q."/>
            <person name="Stapleton M."/>
            <person name="Yamada C."/>
            <person name="Ashburner M."/>
            <person name="Gelbart W.M."/>
            <person name="Rubin G.M."/>
            <person name="Lewis S.E."/>
        </authorList>
    </citation>
    <scope>GENOME REANNOTATION</scope>
    <source>
        <strain>Berkeley</strain>
    </source>
</reference>
<reference key="4">
    <citation type="submission" date="2005-08" db="EMBL/GenBank/DDBJ databases">
        <authorList>
            <person name="Stapleton M."/>
            <person name="Carlson J.W."/>
            <person name="Chavez C."/>
            <person name="Frise E."/>
            <person name="George R.A."/>
            <person name="Pacleb J.M."/>
            <person name="Park S."/>
            <person name="Wan K.H."/>
            <person name="Yu C."/>
            <person name="Celniker S.E."/>
        </authorList>
    </citation>
    <scope>NUCLEOTIDE SEQUENCE [LARGE SCALE MRNA]</scope>
    <source>
        <strain>Berkeley</strain>
        <tissue>Embryo</tissue>
    </source>
</reference>
<reference key="5">
    <citation type="journal article" date="1995" name="Proc. Natl. Acad. Sci. U.S.A.">
        <title>Identification of a second homolog of N-ethylmaleimide-sensitive fusion protein that is expressed in the nervous system and secretory tissues of Drosophila.</title>
        <authorList>
            <person name="Boulianne G.L."/>
            <person name="Trimble W.S."/>
        </authorList>
    </citation>
    <scope>NUCLEOTIDE SEQUENCE [MRNA] OF 8-752</scope>
    <source>
        <tissue>Head</tissue>
    </source>
</reference>
<name>NSF2_DROME</name>
<accession>P54351</accession>
<accession>Q494J2</accession>
<accession>Q9VFQ5</accession>
<keyword id="KW-0067">ATP-binding</keyword>
<keyword id="KW-0963">Cytoplasm</keyword>
<keyword id="KW-0931">ER-Golgi transport</keyword>
<keyword id="KW-0378">Hydrolase</keyword>
<keyword id="KW-0460">Magnesium</keyword>
<keyword id="KW-0479">Metal-binding</keyword>
<keyword id="KW-0547">Nucleotide-binding</keyword>
<keyword id="KW-0653">Protein transport</keyword>
<keyword id="KW-1185">Reference proteome</keyword>
<keyword id="KW-0677">Repeat</keyword>
<keyword id="KW-0813">Transport</keyword>